<feature type="chain" id="PRO_0000225438" description="Dihydroxy-acid dehydratase">
    <location>
        <begin position="1"/>
        <end position="616"/>
    </location>
</feature>
<feature type="active site" description="Proton acceptor" evidence="1">
    <location>
        <position position="517"/>
    </location>
</feature>
<feature type="binding site" evidence="1">
    <location>
        <position position="81"/>
    </location>
    <ligand>
        <name>Mg(2+)</name>
        <dbReference type="ChEBI" id="CHEBI:18420"/>
    </ligand>
</feature>
<feature type="binding site" evidence="1">
    <location>
        <position position="122"/>
    </location>
    <ligand>
        <name>[2Fe-2S] cluster</name>
        <dbReference type="ChEBI" id="CHEBI:190135"/>
    </ligand>
</feature>
<feature type="binding site" evidence="1">
    <location>
        <position position="123"/>
    </location>
    <ligand>
        <name>Mg(2+)</name>
        <dbReference type="ChEBI" id="CHEBI:18420"/>
    </ligand>
</feature>
<feature type="binding site" description="via carbamate group" evidence="1">
    <location>
        <position position="124"/>
    </location>
    <ligand>
        <name>Mg(2+)</name>
        <dbReference type="ChEBI" id="CHEBI:18420"/>
    </ligand>
</feature>
<feature type="binding site" evidence="1">
    <location>
        <position position="195"/>
    </location>
    <ligand>
        <name>[2Fe-2S] cluster</name>
        <dbReference type="ChEBI" id="CHEBI:190135"/>
    </ligand>
</feature>
<feature type="binding site" evidence="1">
    <location>
        <position position="491"/>
    </location>
    <ligand>
        <name>Mg(2+)</name>
        <dbReference type="ChEBI" id="CHEBI:18420"/>
    </ligand>
</feature>
<feature type="modified residue" description="N6-carboxylysine" evidence="1">
    <location>
        <position position="124"/>
    </location>
</feature>
<dbReference type="EC" id="4.2.1.9" evidence="1"/>
<dbReference type="EMBL" id="BX936398">
    <property type="protein sequence ID" value="CAH19377.1"/>
    <property type="molecule type" value="Genomic_DNA"/>
</dbReference>
<dbReference type="RefSeq" id="WP_011191483.1">
    <property type="nucleotide sequence ID" value="NC_006155.1"/>
</dbReference>
<dbReference type="SMR" id="Q66G45"/>
<dbReference type="KEGG" id="ypo:BZ17_2453"/>
<dbReference type="KEGG" id="yps:YPTB0137"/>
<dbReference type="PATRIC" id="fig|273123.14.peg.2578"/>
<dbReference type="UniPathway" id="UPA00047">
    <property type="reaction ID" value="UER00057"/>
</dbReference>
<dbReference type="UniPathway" id="UPA00049">
    <property type="reaction ID" value="UER00061"/>
</dbReference>
<dbReference type="Proteomes" id="UP000001011">
    <property type="component" value="Chromosome"/>
</dbReference>
<dbReference type="GO" id="GO:0005829">
    <property type="term" value="C:cytosol"/>
    <property type="evidence" value="ECO:0007669"/>
    <property type="project" value="TreeGrafter"/>
</dbReference>
<dbReference type="GO" id="GO:0051537">
    <property type="term" value="F:2 iron, 2 sulfur cluster binding"/>
    <property type="evidence" value="ECO:0007669"/>
    <property type="project" value="UniProtKB-UniRule"/>
</dbReference>
<dbReference type="GO" id="GO:0004160">
    <property type="term" value="F:dihydroxy-acid dehydratase activity"/>
    <property type="evidence" value="ECO:0007669"/>
    <property type="project" value="UniProtKB-UniRule"/>
</dbReference>
<dbReference type="GO" id="GO:0000287">
    <property type="term" value="F:magnesium ion binding"/>
    <property type="evidence" value="ECO:0007669"/>
    <property type="project" value="UniProtKB-UniRule"/>
</dbReference>
<dbReference type="GO" id="GO:0009097">
    <property type="term" value="P:isoleucine biosynthetic process"/>
    <property type="evidence" value="ECO:0007669"/>
    <property type="project" value="UniProtKB-UniRule"/>
</dbReference>
<dbReference type="GO" id="GO:0009099">
    <property type="term" value="P:L-valine biosynthetic process"/>
    <property type="evidence" value="ECO:0007669"/>
    <property type="project" value="UniProtKB-UniRule"/>
</dbReference>
<dbReference type="FunFam" id="3.50.30.80:FF:000001">
    <property type="entry name" value="Dihydroxy-acid dehydratase"/>
    <property type="match status" value="1"/>
</dbReference>
<dbReference type="Gene3D" id="3.50.30.80">
    <property type="entry name" value="IlvD/EDD C-terminal domain-like"/>
    <property type="match status" value="1"/>
</dbReference>
<dbReference type="HAMAP" id="MF_00012">
    <property type="entry name" value="IlvD"/>
    <property type="match status" value="1"/>
</dbReference>
<dbReference type="InterPro" id="IPR042096">
    <property type="entry name" value="Dihydro-acid_dehy_C"/>
</dbReference>
<dbReference type="InterPro" id="IPR004404">
    <property type="entry name" value="DihydroxyA_deHydtase"/>
</dbReference>
<dbReference type="InterPro" id="IPR020558">
    <property type="entry name" value="DiOHA_6PGluconate_deHydtase_CS"/>
</dbReference>
<dbReference type="InterPro" id="IPR056740">
    <property type="entry name" value="ILV_EDD_C"/>
</dbReference>
<dbReference type="InterPro" id="IPR000581">
    <property type="entry name" value="ILV_EDD_N"/>
</dbReference>
<dbReference type="InterPro" id="IPR037237">
    <property type="entry name" value="IlvD/EDD_N"/>
</dbReference>
<dbReference type="NCBIfam" id="TIGR00110">
    <property type="entry name" value="ilvD"/>
    <property type="match status" value="1"/>
</dbReference>
<dbReference type="NCBIfam" id="NF009103">
    <property type="entry name" value="PRK12448.1"/>
    <property type="match status" value="1"/>
</dbReference>
<dbReference type="PANTHER" id="PTHR43661">
    <property type="entry name" value="D-XYLONATE DEHYDRATASE"/>
    <property type="match status" value="1"/>
</dbReference>
<dbReference type="PANTHER" id="PTHR43661:SF3">
    <property type="entry name" value="D-XYLONATE DEHYDRATASE YAGF-RELATED"/>
    <property type="match status" value="1"/>
</dbReference>
<dbReference type="Pfam" id="PF24877">
    <property type="entry name" value="ILV_EDD_C"/>
    <property type="match status" value="1"/>
</dbReference>
<dbReference type="Pfam" id="PF00920">
    <property type="entry name" value="ILVD_EDD_N"/>
    <property type="match status" value="1"/>
</dbReference>
<dbReference type="SUPFAM" id="SSF143975">
    <property type="entry name" value="IlvD/EDD N-terminal domain-like"/>
    <property type="match status" value="1"/>
</dbReference>
<dbReference type="SUPFAM" id="SSF52016">
    <property type="entry name" value="LeuD/IlvD-like"/>
    <property type="match status" value="1"/>
</dbReference>
<dbReference type="PROSITE" id="PS00886">
    <property type="entry name" value="ILVD_EDD_1"/>
    <property type="match status" value="1"/>
</dbReference>
<dbReference type="PROSITE" id="PS00887">
    <property type="entry name" value="ILVD_EDD_2"/>
    <property type="match status" value="1"/>
</dbReference>
<keyword id="KW-0001">2Fe-2S</keyword>
<keyword id="KW-0028">Amino-acid biosynthesis</keyword>
<keyword id="KW-0100">Branched-chain amino acid biosynthesis</keyword>
<keyword id="KW-0408">Iron</keyword>
<keyword id="KW-0411">Iron-sulfur</keyword>
<keyword id="KW-0456">Lyase</keyword>
<keyword id="KW-0460">Magnesium</keyword>
<keyword id="KW-0479">Metal-binding</keyword>
<gene>
    <name evidence="1" type="primary">ilvD</name>
    <name type="ordered locus">YPTB0137</name>
</gene>
<accession>Q66G45</accession>
<sequence length="616" mass="65544">MPKYRSHTTTHGRNMAGARALWRATGMTDDDFGKPIIAVVNSFTQFVPGHVHLRDLGKLVAEQIVASGGVAKEFNTIAVDDGIAMGHGGMLYSLPSRELIADSVEYMVNAHCADAMVCISNCDKITPGMLMASLRLNIPVIFVSGGPMEAGKTKLSDKIIKLDLIDAMIQGANPNVSDEESAQIERSACPTCGSCSGMFTANSMNCLNEALGLALPGNGSLLATHADRKQLFLDAGKYIVALTKRYYEQDDVSALPRNIANKAAFENAMILDIAMGGSTNTVLHLLAAAQEGEIDFSMTDIDRLSRKVPHLCKVAPSTQKYHMEDVHRAGGVIGILGELDRAGLLNRDVSNVLGLNLTQTLEAYDVMLTQDEGVKQMYAAGPAGIRTTKAFSQDCRYPSLDTDREEGCIRTREHAYSQDGGLAVLYGNIAADGCIVKTAGVDKDSLTFRGPAKVFESQDEAVEAILGGKVVAGDVVVIRYEGPKGGPGMQEMLYPTTYLKSMGLGKSCALLTDGRFSGGTSGLSIGHVSPEAASGGLIGLVQDGDFINIDIPNRGIVLDVSEAELAARRETEEAHGDAAWSPKGRERQVSYALRAYAMLATSADKGAVRDKSKLGG</sequence>
<proteinExistence type="inferred from homology"/>
<name>ILVD_YERPS</name>
<reference key="1">
    <citation type="journal article" date="2004" name="Proc. Natl. Acad. Sci. U.S.A.">
        <title>Insights into the evolution of Yersinia pestis through whole-genome comparison with Yersinia pseudotuberculosis.</title>
        <authorList>
            <person name="Chain P.S.G."/>
            <person name="Carniel E."/>
            <person name="Larimer F.W."/>
            <person name="Lamerdin J."/>
            <person name="Stoutland P.O."/>
            <person name="Regala W.M."/>
            <person name="Georgescu A.M."/>
            <person name="Vergez L.M."/>
            <person name="Land M.L."/>
            <person name="Motin V.L."/>
            <person name="Brubaker R.R."/>
            <person name="Fowler J."/>
            <person name="Hinnebusch J."/>
            <person name="Marceau M."/>
            <person name="Medigue C."/>
            <person name="Simonet M."/>
            <person name="Chenal-Francisque V."/>
            <person name="Souza B."/>
            <person name="Dacheux D."/>
            <person name="Elliott J.M."/>
            <person name="Derbise A."/>
            <person name="Hauser L.J."/>
            <person name="Garcia E."/>
        </authorList>
    </citation>
    <scope>NUCLEOTIDE SEQUENCE [LARGE SCALE GENOMIC DNA]</scope>
    <source>
        <strain>IP32953</strain>
    </source>
</reference>
<evidence type="ECO:0000255" key="1">
    <source>
        <dbReference type="HAMAP-Rule" id="MF_00012"/>
    </source>
</evidence>
<protein>
    <recommendedName>
        <fullName evidence="1">Dihydroxy-acid dehydratase</fullName>
        <shortName evidence="1">DAD</shortName>
        <ecNumber evidence="1">4.2.1.9</ecNumber>
    </recommendedName>
</protein>
<comment type="function">
    <text evidence="1">Functions in the biosynthesis of branched-chain amino acids. Catalyzes the dehydration of (2R,3R)-2,3-dihydroxy-3-methylpentanoate (2,3-dihydroxy-3-methylvalerate) into 2-oxo-3-methylpentanoate (2-oxo-3-methylvalerate) and of (2R)-2,3-dihydroxy-3-methylbutanoate (2,3-dihydroxyisovalerate) into 2-oxo-3-methylbutanoate (2-oxoisovalerate), the penultimate precursor to L-isoleucine and L-valine, respectively.</text>
</comment>
<comment type="catalytic activity">
    <reaction evidence="1">
        <text>(2R)-2,3-dihydroxy-3-methylbutanoate = 3-methyl-2-oxobutanoate + H2O</text>
        <dbReference type="Rhea" id="RHEA:24809"/>
        <dbReference type="ChEBI" id="CHEBI:11851"/>
        <dbReference type="ChEBI" id="CHEBI:15377"/>
        <dbReference type="ChEBI" id="CHEBI:49072"/>
        <dbReference type="EC" id="4.2.1.9"/>
    </reaction>
    <physiologicalReaction direction="left-to-right" evidence="1">
        <dbReference type="Rhea" id="RHEA:24810"/>
    </physiologicalReaction>
</comment>
<comment type="catalytic activity">
    <reaction evidence="1">
        <text>(2R,3R)-2,3-dihydroxy-3-methylpentanoate = (S)-3-methyl-2-oxopentanoate + H2O</text>
        <dbReference type="Rhea" id="RHEA:27694"/>
        <dbReference type="ChEBI" id="CHEBI:15377"/>
        <dbReference type="ChEBI" id="CHEBI:35146"/>
        <dbReference type="ChEBI" id="CHEBI:49258"/>
        <dbReference type="EC" id="4.2.1.9"/>
    </reaction>
    <physiologicalReaction direction="left-to-right" evidence="1">
        <dbReference type="Rhea" id="RHEA:27695"/>
    </physiologicalReaction>
</comment>
<comment type="cofactor">
    <cofactor evidence="1">
        <name>[2Fe-2S] cluster</name>
        <dbReference type="ChEBI" id="CHEBI:190135"/>
    </cofactor>
    <text evidence="1">Binds 1 [2Fe-2S] cluster per subunit. This cluster acts as a Lewis acid cofactor.</text>
</comment>
<comment type="cofactor">
    <cofactor evidence="1">
        <name>Mg(2+)</name>
        <dbReference type="ChEBI" id="CHEBI:18420"/>
    </cofactor>
</comment>
<comment type="pathway">
    <text evidence="1">Amino-acid biosynthesis; L-isoleucine biosynthesis; L-isoleucine from 2-oxobutanoate: step 3/4.</text>
</comment>
<comment type="pathway">
    <text evidence="1">Amino-acid biosynthesis; L-valine biosynthesis; L-valine from pyruvate: step 3/4.</text>
</comment>
<comment type="subunit">
    <text evidence="1">Homodimer.</text>
</comment>
<comment type="similarity">
    <text evidence="1">Belongs to the IlvD/Edd family.</text>
</comment>
<organism>
    <name type="scientific">Yersinia pseudotuberculosis serotype I (strain IP32953)</name>
    <dbReference type="NCBI Taxonomy" id="273123"/>
    <lineage>
        <taxon>Bacteria</taxon>
        <taxon>Pseudomonadati</taxon>
        <taxon>Pseudomonadota</taxon>
        <taxon>Gammaproteobacteria</taxon>
        <taxon>Enterobacterales</taxon>
        <taxon>Yersiniaceae</taxon>
        <taxon>Yersinia</taxon>
    </lineage>
</organism>